<proteinExistence type="inferred from homology"/>
<accession>Q8K908</accession>
<protein>
    <recommendedName>
        <fullName>Putative N-acetylmuramoyl-L-alanine amidase</fullName>
        <ecNumber>3.5.1.28</ecNumber>
    </recommendedName>
</protein>
<organism>
    <name type="scientific">Buchnera aphidicola subsp. Schizaphis graminum (strain Sg)</name>
    <dbReference type="NCBI Taxonomy" id="198804"/>
    <lineage>
        <taxon>Bacteria</taxon>
        <taxon>Pseudomonadati</taxon>
        <taxon>Pseudomonadota</taxon>
        <taxon>Gammaproteobacteria</taxon>
        <taxon>Enterobacterales</taxon>
        <taxon>Erwiniaceae</taxon>
        <taxon>Buchnera</taxon>
    </lineage>
</organism>
<dbReference type="EC" id="3.5.1.28"/>
<dbReference type="EMBL" id="AE013218">
    <property type="protein sequence ID" value="AAM68093.1"/>
    <property type="molecule type" value="Genomic_DNA"/>
</dbReference>
<dbReference type="RefSeq" id="WP_011054059.1">
    <property type="nucleotide sequence ID" value="NC_004061.1"/>
</dbReference>
<dbReference type="SMR" id="Q8K908"/>
<dbReference type="STRING" id="198804.BUsg_555"/>
<dbReference type="GeneID" id="93004033"/>
<dbReference type="KEGG" id="bas:BUsg_555"/>
<dbReference type="eggNOG" id="COG0860">
    <property type="taxonomic scope" value="Bacteria"/>
</dbReference>
<dbReference type="HOGENOM" id="CLU_014322_4_1_6"/>
<dbReference type="Proteomes" id="UP000000416">
    <property type="component" value="Chromosome"/>
</dbReference>
<dbReference type="GO" id="GO:0005576">
    <property type="term" value="C:extracellular region"/>
    <property type="evidence" value="ECO:0007669"/>
    <property type="project" value="UniProtKB-SubCell"/>
</dbReference>
<dbReference type="GO" id="GO:0030288">
    <property type="term" value="C:outer membrane-bounded periplasmic space"/>
    <property type="evidence" value="ECO:0007669"/>
    <property type="project" value="TreeGrafter"/>
</dbReference>
<dbReference type="GO" id="GO:0008745">
    <property type="term" value="F:N-acetylmuramoyl-L-alanine amidase activity"/>
    <property type="evidence" value="ECO:0007669"/>
    <property type="project" value="UniProtKB-EC"/>
</dbReference>
<dbReference type="GO" id="GO:0071555">
    <property type="term" value="P:cell wall organization"/>
    <property type="evidence" value="ECO:0007669"/>
    <property type="project" value="UniProtKB-KW"/>
</dbReference>
<dbReference type="GO" id="GO:0009253">
    <property type="term" value="P:peptidoglycan catabolic process"/>
    <property type="evidence" value="ECO:0007669"/>
    <property type="project" value="InterPro"/>
</dbReference>
<dbReference type="CDD" id="cd02696">
    <property type="entry name" value="MurNAc-LAA"/>
    <property type="match status" value="1"/>
</dbReference>
<dbReference type="Gene3D" id="3.40.630.40">
    <property type="entry name" value="Zn-dependent exopeptidases"/>
    <property type="match status" value="1"/>
</dbReference>
<dbReference type="InterPro" id="IPR002508">
    <property type="entry name" value="MurNAc-LAA_cat"/>
</dbReference>
<dbReference type="InterPro" id="IPR050695">
    <property type="entry name" value="N-acetylmuramoyl_amidase_3"/>
</dbReference>
<dbReference type="PANTHER" id="PTHR30404">
    <property type="entry name" value="N-ACETYLMURAMOYL-L-ALANINE AMIDASE"/>
    <property type="match status" value="1"/>
</dbReference>
<dbReference type="PANTHER" id="PTHR30404:SF6">
    <property type="entry name" value="N-ACETYLMURAMOYL-L-ALANINE AMIDASE AMIB"/>
    <property type="match status" value="1"/>
</dbReference>
<dbReference type="Pfam" id="PF01520">
    <property type="entry name" value="Amidase_3"/>
    <property type="match status" value="1"/>
</dbReference>
<dbReference type="SMART" id="SM00646">
    <property type="entry name" value="Ami_3"/>
    <property type="match status" value="1"/>
</dbReference>
<dbReference type="SUPFAM" id="SSF53187">
    <property type="entry name" value="Zn-dependent exopeptidases"/>
    <property type="match status" value="1"/>
</dbReference>
<reference key="1">
    <citation type="journal article" date="2002" name="Science">
        <title>50 million years of genomic stasis in endosymbiotic bacteria.</title>
        <authorList>
            <person name="Tamas I."/>
            <person name="Klasson L."/>
            <person name="Canbaeck B."/>
            <person name="Naeslund A.K."/>
            <person name="Eriksson A.-S."/>
            <person name="Wernegreen J.J."/>
            <person name="Sandstroem J.P."/>
            <person name="Moran N.A."/>
            <person name="Andersson S.G.E."/>
        </authorList>
    </citation>
    <scope>NUCLEOTIDE SEQUENCE [LARGE SCALE GENOMIC DNA]</scope>
    <source>
        <strain>Sg</strain>
    </source>
</reference>
<evidence type="ECO:0000250" key="1"/>
<evidence type="ECO:0000255" key="2"/>
<evidence type="ECO:0000305" key="3"/>
<comment type="function">
    <text evidence="1">Cell-wall hydrolase involved in septum cleavage during cell division.</text>
</comment>
<comment type="catalytic activity">
    <reaction>
        <text>Hydrolyzes the link between N-acetylmuramoyl residues and L-amino acid residues in certain cell-wall glycopeptides.</text>
        <dbReference type="EC" id="3.5.1.28"/>
    </reaction>
</comment>
<comment type="subcellular location">
    <subcellularLocation>
        <location evidence="3">Secreted</location>
    </subcellularLocation>
</comment>
<comment type="similarity">
    <text evidence="3">Belongs to the N-acetylmuramoyl-L-alanine amidase 3 family.</text>
</comment>
<feature type="chain" id="PRO_0000164422" description="Putative N-acetylmuramoyl-L-alanine amidase">
    <location>
        <begin position="1"/>
        <end position="233"/>
    </location>
</feature>
<feature type="domain" description="MurNAc-LAA" evidence="2">
    <location>
        <begin position="1"/>
        <end position="219"/>
    </location>
</feature>
<gene>
    <name type="primary">amiB</name>
    <name type="ordered locus">BUsg_555</name>
</gene>
<keyword id="KW-0961">Cell wall biogenesis/degradation</keyword>
<keyword id="KW-0378">Hydrolase</keyword>
<keyword id="KW-0964">Secreted</keyword>
<sequence length="233" mass="27259">MIDPGHGGQDPGAINSLGLQEKKITLKIGIKLKNLLQNSDLFYPVLTRNDDSYVSLKKRRDFLKNNHVSFLISIHADSSKKRYVSGASIWITTNDRMHREINNFIKNREENIYFPKNIQNLIQKNKHDFFLKKTVLDLQFNNFQKMEINLSRYIFQQLKKIIKLDKINLNYASLGILSSINTPSMLIETGFITNFLEEKKLRTNKYQNKIANAIYIALKNYFQDRLLSNLRNT</sequence>
<name>AMIB_BUCAP</name>